<accession>Q7W0E3</accession>
<gene>
    <name evidence="1" type="primary">gcvP</name>
    <name type="ordered locus">BP0197</name>
</gene>
<comment type="function">
    <text evidence="1">The glycine cleavage system catalyzes the degradation of glycine. The P protein binds the alpha-amino group of glycine through its pyridoxal phosphate cofactor; CO(2) is released and the remaining methylamine moiety is then transferred to the lipoamide cofactor of the H protein.</text>
</comment>
<comment type="catalytic activity">
    <reaction evidence="1">
        <text>N(6)-[(R)-lipoyl]-L-lysyl-[glycine-cleavage complex H protein] + glycine + H(+) = N(6)-[(R)-S(8)-aminomethyldihydrolipoyl]-L-lysyl-[glycine-cleavage complex H protein] + CO2</text>
        <dbReference type="Rhea" id="RHEA:24304"/>
        <dbReference type="Rhea" id="RHEA-COMP:10494"/>
        <dbReference type="Rhea" id="RHEA-COMP:10495"/>
        <dbReference type="ChEBI" id="CHEBI:15378"/>
        <dbReference type="ChEBI" id="CHEBI:16526"/>
        <dbReference type="ChEBI" id="CHEBI:57305"/>
        <dbReference type="ChEBI" id="CHEBI:83099"/>
        <dbReference type="ChEBI" id="CHEBI:83143"/>
        <dbReference type="EC" id="1.4.4.2"/>
    </reaction>
</comment>
<comment type="cofactor">
    <cofactor evidence="1">
        <name>pyridoxal 5'-phosphate</name>
        <dbReference type="ChEBI" id="CHEBI:597326"/>
    </cofactor>
</comment>
<comment type="subunit">
    <text evidence="1">The glycine cleavage system is composed of four proteins: P, T, L and H.</text>
</comment>
<comment type="similarity">
    <text evidence="1">Belongs to the GcvP family.</text>
</comment>
<feature type="chain" id="PRO_0000166906" description="Glycine dehydrogenase (decarboxylating)">
    <location>
        <begin position="1"/>
        <end position="954"/>
    </location>
</feature>
<feature type="modified residue" description="N6-(pyridoxal phosphate)lysine" evidence="1">
    <location>
        <position position="701"/>
    </location>
</feature>
<organism>
    <name type="scientific">Bordetella pertussis (strain Tohama I / ATCC BAA-589 / NCTC 13251)</name>
    <dbReference type="NCBI Taxonomy" id="257313"/>
    <lineage>
        <taxon>Bacteria</taxon>
        <taxon>Pseudomonadati</taxon>
        <taxon>Pseudomonadota</taxon>
        <taxon>Betaproteobacteria</taxon>
        <taxon>Burkholderiales</taxon>
        <taxon>Alcaligenaceae</taxon>
        <taxon>Bordetella</taxon>
    </lineage>
</organism>
<dbReference type="EC" id="1.4.4.2" evidence="1"/>
<dbReference type="EMBL" id="BX640411">
    <property type="protein sequence ID" value="CAE40576.1"/>
    <property type="molecule type" value="Genomic_DNA"/>
</dbReference>
<dbReference type="RefSeq" id="NP_879086.1">
    <property type="nucleotide sequence ID" value="NC_002929.2"/>
</dbReference>
<dbReference type="RefSeq" id="WP_010929677.1">
    <property type="nucleotide sequence ID" value="NZ_CP039022.1"/>
</dbReference>
<dbReference type="SMR" id="Q7W0E3"/>
<dbReference type="STRING" id="257313.BP0197"/>
<dbReference type="PaxDb" id="257313-BP0197"/>
<dbReference type="GeneID" id="69603546"/>
<dbReference type="KEGG" id="bpe:BP0197"/>
<dbReference type="PATRIC" id="fig|257313.5.peg.209"/>
<dbReference type="eggNOG" id="COG0403">
    <property type="taxonomic scope" value="Bacteria"/>
</dbReference>
<dbReference type="eggNOG" id="COG1003">
    <property type="taxonomic scope" value="Bacteria"/>
</dbReference>
<dbReference type="HOGENOM" id="CLU_004620_3_2_4"/>
<dbReference type="Proteomes" id="UP000002676">
    <property type="component" value="Chromosome"/>
</dbReference>
<dbReference type="GO" id="GO:0005829">
    <property type="term" value="C:cytosol"/>
    <property type="evidence" value="ECO:0007669"/>
    <property type="project" value="TreeGrafter"/>
</dbReference>
<dbReference type="GO" id="GO:0005960">
    <property type="term" value="C:glycine cleavage complex"/>
    <property type="evidence" value="ECO:0007669"/>
    <property type="project" value="TreeGrafter"/>
</dbReference>
<dbReference type="GO" id="GO:0016594">
    <property type="term" value="F:glycine binding"/>
    <property type="evidence" value="ECO:0007669"/>
    <property type="project" value="TreeGrafter"/>
</dbReference>
<dbReference type="GO" id="GO:0004375">
    <property type="term" value="F:glycine dehydrogenase (decarboxylating) activity"/>
    <property type="evidence" value="ECO:0007669"/>
    <property type="project" value="UniProtKB-EC"/>
</dbReference>
<dbReference type="GO" id="GO:0030170">
    <property type="term" value="F:pyridoxal phosphate binding"/>
    <property type="evidence" value="ECO:0007669"/>
    <property type="project" value="TreeGrafter"/>
</dbReference>
<dbReference type="GO" id="GO:0019464">
    <property type="term" value="P:glycine decarboxylation via glycine cleavage system"/>
    <property type="evidence" value="ECO:0007669"/>
    <property type="project" value="UniProtKB-UniRule"/>
</dbReference>
<dbReference type="CDD" id="cd00613">
    <property type="entry name" value="GDC-P"/>
    <property type="match status" value="2"/>
</dbReference>
<dbReference type="FunFam" id="3.40.640.10:FF:000005">
    <property type="entry name" value="Glycine dehydrogenase (decarboxylating), mitochondrial"/>
    <property type="match status" value="1"/>
</dbReference>
<dbReference type="FunFam" id="3.90.1150.10:FF:000007">
    <property type="entry name" value="Glycine dehydrogenase (decarboxylating), mitochondrial"/>
    <property type="match status" value="1"/>
</dbReference>
<dbReference type="FunFam" id="3.40.640.10:FF:000007">
    <property type="entry name" value="glycine dehydrogenase (Decarboxylating), mitochondrial"/>
    <property type="match status" value="1"/>
</dbReference>
<dbReference type="Gene3D" id="3.90.1150.10">
    <property type="entry name" value="Aspartate Aminotransferase, domain 1"/>
    <property type="match status" value="2"/>
</dbReference>
<dbReference type="Gene3D" id="3.40.640.10">
    <property type="entry name" value="Type I PLP-dependent aspartate aminotransferase-like (Major domain)"/>
    <property type="match status" value="2"/>
</dbReference>
<dbReference type="HAMAP" id="MF_00711">
    <property type="entry name" value="GcvP"/>
    <property type="match status" value="1"/>
</dbReference>
<dbReference type="InterPro" id="IPR003437">
    <property type="entry name" value="GcvP"/>
</dbReference>
<dbReference type="InterPro" id="IPR049316">
    <property type="entry name" value="GDC-P_C"/>
</dbReference>
<dbReference type="InterPro" id="IPR049315">
    <property type="entry name" value="GDC-P_N"/>
</dbReference>
<dbReference type="InterPro" id="IPR020581">
    <property type="entry name" value="GDC_P"/>
</dbReference>
<dbReference type="InterPro" id="IPR015424">
    <property type="entry name" value="PyrdxlP-dep_Trfase"/>
</dbReference>
<dbReference type="InterPro" id="IPR015421">
    <property type="entry name" value="PyrdxlP-dep_Trfase_major"/>
</dbReference>
<dbReference type="InterPro" id="IPR015422">
    <property type="entry name" value="PyrdxlP-dep_Trfase_small"/>
</dbReference>
<dbReference type="NCBIfam" id="TIGR00461">
    <property type="entry name" value="gcvP"/>
    <property type="match status" value="1"/>
</dbReference>
<dbReference type="NCBIfam" id="NF001696">
    <property type="entry name" value="PRK00451.1"/>
    <property type="match status" value="1"/>
</dbReference>
<dbReference type="NCBIfam" id="NF003346">
    <property type="entry name" value="PRK04366.1"/>
    <property type="match status" value="1"/>
</dbReference>
<dbReference type="PANTHER" id="PTHR11773:SF1">
    <property type="entry name" value="GLYCINE DEHYDROGENASE (DECARBOXYLATING), MITOCHONDRIAL"/>
    <property type="match status" value="1"/>
</dbReference>
<dbReference type="PANTHER" id="PTHR11773">
    <property type="entry name" value="GLYCINE DEHYDROGENASE, DECARBOXYLATING"/>
    <property type="match status" value="1"/>
</dbReference>
<dbReference type="Pfam" id="PF21478">
    <property type="entry name" value="GcvP2_C"/>
    <property type="match status" value="1"/>
</dbReference>
<dbReference type="Pfam" id="PF02347">
    <property type="entry name" value="GDC-P"/>
    <property type="match status" value="2"/>
</dbReference>
<dbReference type="SUPFAM" id="SSF53383">
    <property type="entry name" value="PLP-dependent transferases"/>
    <property type="match status" value="2"/>
</dbReference>
<reference key="1">
    <citation type="journal article" date="2003" name="Nat. Genet.">
        <title>Comparative analysis of the genome sequences of Bordetella pertussis, Bordetella parapertussis and Bordetella bronchiseptica.</title>
        <authorList>
            <person name="Parkhill J."/>
            <person name="Sebaihia M."/>
            <person name="Preston A."/>
            <person name="Murphy L.D."/>
            <person name="Thomson N.R."/>
            <person name="Harris D.E."/>
            <person name="Holden M.T.G."/>
            <person name="Churcher C.M."/>
            <person name="Bentley S.D."/>
            <person name="Mungall K.L."/>
            <person name="Cerdeno-Tarraga A.-M."/>
            <person name="Temple L."/>
            <person name="James K.D."/>
            <person name="Harris B."/>
            <person name="Quail M.A."/>
            <person name="Achtman M."/>
            <person name="Atkin R."/>
            <person name="Baker S."/>
            <person name="Basham D."/>
            <person name="Bason N."/>
            <person name="Cherevach I."/>
            <person name="Chillingworth T."/>
            <person name="Collins M."/>
            <person name="Cronin A."/>
            <person name="Davis P."/>
            <person name="Doggett J."/>
            <person name="Feltwell T."/>
            <person name="Goble A."/>
            <person name="Hamlin N."/>
            <person name="Hauser H."/>
            <person name="Holroyd S."/>
            <person name="Jagels K."/>
            <person name="Leather S."/>
            <person name="Moule S."/>
            <person name="Norberczak H."/>
            <person name="O'Neil S."/>
            <person name="Ormond D."/>
            <person name="Price C."/>
            <person name="Rabbinowitsch E."/>
            <person name="Rutter S."/>
            <person name="Sanders M."/>
            <person name="Saunders D."/>
            <person name="Seeger K."/>
            <person name="Sharp S."/>
            <person name="Simmonds M."/>
            <person name="Skelton J."/>
            <person name="Squares R."/>
            <person name="Squares S."/>
            <person name="Stevens K."/>
            <person name="Unwin L."/>
            <person name="Whitehead S."/>
            <person name="Barrell B.G."/>
            <person name="Maskell D.J."/>
        </authorList>
    </citation>
    <scope>NUCLEOTIDE SEQUENCE [LARGE SCALE GENOMIC DNA]</scope>
    <source>
        <strain>Tohama I / ATCC BAA-589 / NCTC 13251</strain>
    </source>
</reference>
<keyword id="KW-0560">Oxidoreductase</keyword>
<keyword id="KW-0663">Pyridoxal phosphate</keyword>
<keyword id="KW-1185">Reference proteome</keyword>
<protein>
    <recommendedName>
        <fullName evidence="1">Glycine dehydrogenase (decarboxylating)</fullName>
        <ecNumber evidence="1">1.4.4.2</ecNumber>
    </recommendedName>
    <alternativeName>
        <fullName evidence="1">Glycine cleavage system P-protein</fullName>
    </alternativeName>
    <alternativeName>
        <fullName evidence="1">Glycine decarboxylase</fullName>
    </alternativeName>
    <alternativeName>
        <fullName evidence="1">Glycine dehydrogenase (aminomethyl-transferring)</fullName>
    </alternativeName>
</protein>
<name>GCSP_BORPE</name>
<proteinExistence type="inferred from homology"/>
<evidence type="ECO:0000255" key="1">
    <source>
        <dbReference type="HAMAP-Rule" id="MF_00711"/>
    </source>
</evidence>
<sequence>MSRAPDTHSDFIPRHIGPSDEDQATMLVAIGAASLDALIDEVVPPRIRSRAPLALPAARSETDVLQDLKRIAARNQIYRNYIGQGYYGTHTPNVVLRNVLENPAWYTAYTPYQPEISQGRLEALLNYQTMVADLTGLDISNASLLDEGTAAAEAMTLARRGSRSSSPVFFVSQHCHPQTLEVVRTRAEGLGIELVIGDESRGLPECFGVLLQYPHSLGGVADYRELAQAAHAQGAVVACVTDLLALALIEPPGQWGADIAVGSAQRFGVPFGFGGPHAGFMACRDAYKRNMPGRLVGVSKDAQGNPALRLALQTREQHIRREKATSNICTAQVLLAVMAGLYAVWHGPRGVRRIAERVQSLTGALRAALAGLGVKVANDTWFDTLSLETGAATPAILAAADCARINLRQVDGARLAVSLDETVTLADLQALVNVFAAGLGKDEVALAPPQASLDGIPAAVRRQGPILSHPVFSSVQSETDMLRYLRKLADKDLALDRTMIPLGSCTMKLNATAEMIPITWPEFALIHPFAPASQTPGYRELIEGLSAQLCEITGYDGISLQPNSGAQGEYAGLLAIRAYHQANGQPQRNVCLIPASAHGTNPASAQLAGMDVVVVASDANGNVDLADLRARIAQVGERLAALMITYPSTHGVFEEAVTEICDAVHEAGGQVYLDGANMNAMVGVAQPGKFGSDVSHLNLHKTFCIPHGGGGPGVGPVAVRAHLAPYLPGVLDARGRLDPEAKVGPVSAAPYGSAGILPIPYVYIALMGAEGLRRATEVAILNANYIATRLRGHYPVLYAGRNGRVAHECILDVRPLKETSGISAEDIAKRLMDYGFHAPTMSFPVAGTLMVEPTESEGLAELERFIEAMIAIRAEIAQVESGERDRDDNVLRNAPHTAQMLLAEEWHHDYPRQQAAYPVASLRENKYWPPVARVDNAYGDRNLVCACLPVEAYA</sequence>